<keyword id="KW-0903">Direct protein sequencing</keyword>
<keyword id="KW-1015">Disulfide bond</keyword>
<keyword id="KW-0325">Glycoprotein</keyword>
<keyword id="KW-0646">Protease inhibitor</keyword>
<keyword id="KW-0677">Repeat</keyword>
<keyword id="KW-0964">Secreted</keyword>
<keyword id="KW-0722">Serine protease inhibitor</keyword>
<feature type="chain" id="PRO_0000073186" description="Ovomucoid">
    <location>
        <begin position="1" status="less than"/>
        <end position="51" status="greater than"/>
    </location>
</feature>
<feature type="domain" description="Kazal-like" evidence="1">
    <location>
        <begin position="3"/>
        <end position="51"/>
    </location>
</feature>
<feature type="site" description="Reactive bond 3">
    <location>
        <begin position="15"/>
        <end position="16"/>
    </location>
</feature>
<feature type="glycosylation site" description="N-linked (GlcNAc...) asparagine">
    <location>
        <position position="42"/>
    </location>
</feature>
<feature type="disulfide bond">
    <location>
        <begin position="5"/>
        <end position="35"/>
    </location>
</feature>
<feature type="disulfide bond">
    <location>
        <begin position="13"/>
        <end position="32"/>
    </location>
</feature>
<feature type="disulfide bond">
    <location>
        <begin position="21"/>
        <end position="51"/>
    </location>
</feature>
<feature type="non-terminal residue">
    <location>
        <position position="1"/>
    </location>
</feature>
<feature type="non-terminal residue">
    <location>
        <position position="51"/>
    </location>
</feature>
<evidence type="ECO:0000255" key="1">
    <source>
        <dbReference type="PROSITE-ProRule" id="PRU00798"/>
    </source>
</evidence>
<organism>
    <name type="scientific">Tinamus major</name>
    <name type="common">Great tinamou</name>
    <name type="synonym">Tetrao major</name>
    <dbReference type="NCBI Taxonomy" id="30468"/>
    <lineage>
        <taxon>Eukaryota</taxon>
        <taxon>Metazoa</taxon>
        <taxon>Chordata</taxon>
        <taxon>Craniata</taxon>
        <taxon>Vertebrata</taxon>
        <taxon>Euteleostomi</taxon>
        <taxon>Archelosauria</taxon>
        <taxon>Archosauria</taxon>
        <taxon>Dinosauria</taxon>
        <taxon>Saurischia</taxon>
        <taxon>Theropoda</taxon>
        <taxon>Coelurosauria</taxon>
        <taxon>Aves</taxon>
        <taxon>Palaeognathae</taxon>
        <taxon>Tinamiformes</taxon>
        <taxon>Tinamidae</taxon>
        <taxon>Tinamus</taxon>
    </lineage>
</organism>
<protein>
    <recommendedName>
        <fullName>Ovomucoid</fullName>
    </recommendedName>
</protein>
<reference key="1">
    <citation type="journal article" date="1993" name="J. Protein Chem.">
        <title>Amino acid sequences of ovomucoid third domains from 27 additional species of birds.</title>
        <authorList>
            <person name="Apostol I."/>
            <person name="Giletto A."/>
            <person name="Komiyama T."/>
            <person name="Zhang W."/>
            <person name="Laskowski M. Jr."/>
        </authorList>
    </citation>
    <scope>PROTEIN SEQUENCE</scope>
</reference>
<accession>P52254</accession>
<sequence>VTVDCSGYPKPACTAEYFPLCGSDNQTYSNKCAFCNAAVEKNVTLGHFGEC</sequence>
<dbReference type="PIR" id="B61587">
    <property type="entry name" value="B61587"/>
</dbReference>
<dbReference type="SMR" id="P52254"/>
<dbReference type="GO" id="GO:0005576">
    <property type="term" value="C:extracellular region"/>
    <property type="evidence" value="ECO:0007669"/>
    <property type="project" value="UniProtKB-SubCell"/>
</dbReference>
<dbReference type="GO" id="GO:0004867">
    <property type="term" value="F:serine-type endopeptidase inhibitor activity"/>
    <property type="evidence" value="ECO:0007669"/>
    <property type="project" value="UniProtKB-KW"/>
</dbReference>
<dbReference type="CDD" id="cd00104">
    <property type="entry name" value="KAZAL_FS"/>
    <property type="match status" value="1"/>
</dbReference>
<dbReference type="FunFam" id="3.30.60.30:FF:000037">
    <property type="entry name" value="Ovomucoid"/>
    <property type="match status" value="1"/>
</dbReference>
<dbReference type="Gene3D" id="3.30.60.30">
    <property type="match status" value="1"/>
</dbReference>
<dbReference type="InterPro" id="IPR051597">
    <property type="entry name" value="Bifunctional_prot_inhibitor"/>
</dbReference>
<dbReference type="InterPro" id="IPR002350">
    <property type="entry name" value="Kazal_dom"/>
</dbReference>
<dbReference type="InterPro" id="IPR036058">
    <property type="entry name" value="Kazal_dom_sf"/>
</dbReference>
<dbReference type="InterPro" id="IPR001239">
    <property type="entry name" value="Prot_inh_Kazal-m"/>
</dbReference>
<dbReference type="PANTHER" id="PTHR47729:SF1">
    <property type="entry name" value="OVOMUCOID-LIKE-RELATED"/>
    <property type="match status" value="1"/>
</dbReference>
<dbReference type="PANTHER" id="PTHR47729">
    <property type="entry name" value="SERINE PEPTIDASE INHIBITOR, KAZAL TYPE 2, TANDEM DUPLICATE 1-RELATED"/>
    <property type="match status" value="1"/>
</dbReference>
<dbReference type="Pfam" id="PF00050">
    <property type="entry name" value="Kazal_1"/>
    <property type="match status" value="1"/>
</dbReference>
<dbReference type="PRINTS" id="PR00290">
    <property type="entry name" value="KAZALINHBTR"/>
</dbReference>
<dbReference type="SMART" id="SM00280">
    <property type="entry name" value="KAZAL"/>
    <property type="match status" value="1"/>
</dbReference>
<dbReference type="SUPFAM" id="SSF100895">
    <property type="entry name" value="Kazal-type serine protease inhibitors"/>
    <property type="match status" value="1"/>
</dbReference>
<dbReference type="PROSITE" id="PS00282">
    <property type="entry name" value="KAZAL_1"/>
    <property type="match status" value="1"/>
</dbReference>
<dbReference type="PROSITE" id="PS51465">
    <property type="entry name" value="KAZAL_2"/>
    <property type="match status" value="1"/>
</dbReference>
<proteinExistence type="evidence at protein level"/>
<comment type="subcellular location">
    <subcellularLocation>
        <location>Secreted</location>
    </subcellularLocation>
</comment>
<comment type="domain">
    <text>Avian ovomucoid consists of three homologous, tandem Kazal family inhibitory domains.</text>
</comment>
<name>IOVO_TINMA</name>